<accession>Q724K5</accession>
<name>Y219_LISMF</name>
<sequence>MIVTTSPNIEGKQIIEYKKIVFGEVITGVNFMKDIGAGLRNFFGGRSQGYEDELINAREEAIREMEQRAKDIGANAVIGVDIDYEVLGADNGMLMVTASGTAVVIEAQDY</sequence>
<feature type="chain" id="PRO_0000138474" description="UPF0145 protein LMOf2365_0219">
    <location>
        <begin position="1"/>
        <end position="110"/>
    </location>
</feature>
<proteinExistence type="inferred from homology"/>
<dbReference type="EMBL" id="AE017262">
    <property type="protein sequence ID" value="AAT03006.1"/>
    <property type="molecule type" value="Genomic_DNA"/>
</dbReference>
<dbReference type="RefSeq" id="WP_003725735.1">
    <property type="nucleotide sequence ID" value="NC_002973.6"/>
</dbReference>
<dbReference type="SMR" id="Q724K5"/>
<dbReference type="KEGG" id="lmf:LMOf2365_0219"/>
<dbReference type="HOGENOM" id="CLU_117144_3_1_9"/>
<dbReference type="Gene3D" id="3.30.110.70">
    <property type="entry name" value="Hypothetical protein apc22750. Chain B"/>
    <property type="match status" value="1"/>
</dbReference>
<dbReference type="HAMAP" id="MF_00338">
    <property type="entry name" value="UPF0145"/>
    <property type="match status" value="1"/>
</dbReference>
<dbReference type="InterPro" id="IPR035439">
    <property type="entry name" value="UPF0145_dom_sf"/>
</dbReference>
<dbReference type="InterPro" id="IPR002765">
    <property type="entry name" value="UPF0145_YbjQ-like"/>
</dbReference>
<dbReference type="NCBIfam" id="NF002224">
    <property type="entry name" value="PRK01119.1"/>
    <property type="match status" value="1"/>
</dbReference>
<dbReference type="PANTHER" id="PTHR34068">
    <property type="entry name" value="UPF0145 PROTEIN YBJQ"/>
    <property type="match status" value="1"/>
</dbReference>
<dbReference type="PANTHER" id="PTHR34068:SF1">
    <property type="entry name" value="UPF0145 PROTEIN YBJQ"/>
    <property type="match status" value="1"/>
</dbReference>
<dbReference type="Pfam" id="PF01906">
    <property type="entry name" value="YbjQ_1"/>
    <property type="match status" value="1"/>
</dbReference>
<dbReference type="SUPFAM" id="SSF117782">
    <property type="entry name" value="YbjQ-like"/>
    <property type="match status" value="1"/>
</dbReference>
<gene>
    <name type="ordered locus">LMOf2365_0219</name>
</gene>
<comment type="similarity">
    <text evidence="1">Belongs to the UPF0145 family.</text>
</comment>
<evidence type="ECO:0000255" key="1">
    <source>
        <dbReference type="HAMAP-Rule" id="MF_00338"/>
    </source>
</evidence>
<organism>
    <name type="scientific">Listeria monocytogenes serotype 4b (strain F2365)</name>
    <dbReference type="NCBI Taxonomy" id="265669"/>
    <lineage>
        <taxon>Bacteria</taxon>
        <taxon>Bacillati</taxon>
        <taxon>Bacillota</taxon>
        <taxon>Bacilli</taxon>
        <taxon>Bacillales</taxon>
        <taxon>Listeriaceae</taxon>
        <taxon>Listeria</taxon>
    </lineage>
</organism>
<protein>
    <recommendedName>
        <fullName evidence="1">UPF0145 protein LMOf2365_0219</fullName>
    </recommendedName>
</protein>
<reference key="1">
    <citation type="journal article" date="2004" name="Nucleic Acids Res.">
        <title>Whole genome comparisons of serotype 4b and 1/2a strains of the food-borne pathogen Listeria monocytogenes reveal new insights into the core genome components of this species.</title>
        <authorList>
            <person name="Nelson K.E."/>
            <person name="Fouts D.E."/>
            <person name="Mongodin E.F."/>
            <person name="Ravel J."/>
            <person name="DeBoy R.T."/>
            <person name="Kolonay J.F."/>
            <person name="Rasko D.A."/>
            <person name="Angiuoli S.V."/>
            <person name="Gill S.R."/>
            <person name="Paulsen I.T."/>
            <person name="Peterson J.D."/>
            <person name="White O."/>
            <person name="Nelson W.C."/>
            <person name="Nierman W.C."/>
            <person name="Beanan M.J."/>
            <person name="Brinkac L.M."/>
            <person name="Daugherty S.C."/>
            <person name="Dodson R.J."/>
            <person name="Durkin A.S."/>
            <person name="Madupu R."/>
            <person name="Haft D.H."/>
            <person name="Selengut J."/>
            <person name="Van Aken S.E."/>
            <person name="Khouri H.M."/>
            <person name="Fedorova N."/>
            <person name="Forberger H.A."/>
            <person name="Tran B."/>
            <person name="Kathariou S."/>
            <person name="Wonderling L.D."/>
            <person name="Uhlich G.A."/>
            <person name="Bayles D.O."/>
            <person name="Luchansky J.B."/>
            <person name="Fraser C.M."/>
        </authorList>
    </citation>
    <scope>NUCLEOTIDE SEQUENCE [LARGE SCALE GENOMIC DNA]</scope>
    <source>
        <strain>F2365</strain>
    </source>
</reference>